<accession>Q5R5M4</accession>
<accession>Q5R5G5</accession>
<reference key="1">
    <citation type="submission" date="2004-11" db="EMBL/GenBank/DDBJ databases">
        <authorList>
            <consortium name="The German cDNA consortium"/>
        </authorList>
    </citation>
    <scope>NUCLEOTIDE SEQUENCE [LARGE SCALE MRNA]</scope>
    <source>
        <tissue>Kidney</tissue>
    </source>
</reference>
<keyword id="KW-1003">Cell membrane</keyword>
<keyword id="KW-0472">Membrane</keyword>
<keyword id="KW-1185">Reference proteome</keyword>
<keyword id="KW-0769">Symport</keyword>
<keyword id="KW-0812">Transmembrane</keyword>
<keyword id="KW-1133">Transmembrane helix</keyword>
<keyword id="KW-0813">Transport</keyword>
<evidence type="ECO:0000250" key="1">
    <source>
        <dbReference type="UniProtKB" id="Q7RTY1"/>
    </source>
</evidence>
<evidence type="ECO:0000255" key="2"/>
<evidence type="ECO:0000305" key="3"/>
<sequence length="509" mass="55829">MELKKSPDGGWGWVIVFVSFFTQFLCYGSPLAVGVLYIEWLDAFGEGKGKTAWVGSLASGVGLLASPVCSLCVSSFGARPVTIFSGFMVAGGLMLSSFAPNIYFLFFSYGIVVGLGCGLLYTATVTITCLYFDDRRGLALGLISTGSSVGLFIYAALQRMLVEFYGLDGCLLIVGALALNILACGSLMRPLQSSDCPLPKKIAPEDLPDKYSIYNEKGKNLEENINILEKSYSSEEKCRTTLANGDWKQDSLLHKNPTVTHTKEPETYKKKVAEQTYFCKQLAKRKWQLYKNYCGETVALFKNKVFSALFIAILLFDIGGFPPSLLMEDVARSSNVKEEEFIMPLISIIGIMTAVGKLLLGILADFKWINTLYLYVATLIIMGLALCAIPFAKSYVTLALLSGILGFLTGNWSIFPYVTTKTVGIEKLAHAYGILMFFAGLGNSLGPPIVGWFYDWTQTYEIAFYFSGFCVLLGGFILLLAALPSWDTCNKQLPKPAPTTFLYKVASNV</sequence>
<comment type="function">
    <text evidence="1">Extracellular pH-and Na(+)-sensitive low-affinity creatine transporter. Also functions as a pH-independent carnitine efflux transporter.</text>
</comment>
<comment type="catalytic activity">
    <reaction evidence="1">
        <text>creatine(in) = creatine(out)</text>
        <dbReference type="Rhea" id="RHEA:73043"/>
        <dbReference type="ChEBI" id="CHEBI:57947"/>
    </reaction>
</comment>
<comment type="catalytic activity">
    <reaction evidence="1">
        <text>(R)-carnitine(in) = (R)-carnitine(out)</text>
        <dbReference type="Rhea" id="RHEA:34959"/>
        <dbReference type="ChEBI" id="CHEBI:16347"/>
    </reaction>
</comment>
<comment type="subcellular location">
    <subcellularLocation>
        <location evidence="1">Cell membrane</location>
        <topology evidence="2">Multi-pass membrane protein</topology>
    </subcellularLocation>
</comment>
<comment type="similarity">
    <text evidence="3">Belongs to the major facilitator superfamily. Monocarboxylate porter (TC 2.A.1.13) family.</text>
</comment>
<protein>
    <recommendedName>
        <fullName>Monocarboxylate transporter 9</fullName>
        <shortName>MCT 9</shortName>
    </recommendedName>
    <alternativeName>
        <fullName>Solute carrier family 16 member 9</fullName>
    </alternativeName>
</protein>
<organism>
    <name type="scientific">Pongo abelii</name>
    <name type="common">Sumatran orangutan</name>
    <name type="synonym">Pongo pygmaeus abelii</name>
    <dbReference type="NCBI Taxonomy" id="9601"/>
    <lineage>
        <taxon>Eukaryota</taxon>
        <taxon>Metazoa</taxon>
        <taxon>Chordata</taxon>
        <taxon>Craniata</taxon>
        <taxon>Vertebrata</taxon>
        <taxon>Euteleostomi</taxon>
        <taxon>Mammalia</taxon>
        <taxon>Eutheria</taxon>
        <taxon>Euarchontoglires</taxon>
        <taxon>Primates</taxon>
        <taxon>Haplorrhini</taxon>
        <taxon>Catarrhini</taxon>
        <taxon>Hominidae</taxon>
        <taxon>Pongo</taxon>
    </lineage>
</organism>
<dbReference type="EMBL" id="CR860833">
    <property type="protein sequence ID" value="CAH92942.1"/>
    <property type="molecule type" value="mRNA"/>
</dbReference>
<dbReference type="EMBL" id="CR860895">
    <property type="protein sequence ID" value="CAH93001.1"/>
    <property type="molecule type" value="mRNA"/>
</dbReference>
<dbReference type="RefSeq" id="NP_001126733.1">
    <property type="nucleotide sequence ID" value="NM_001133261.1"/>
</dbReference>
<dbReference type="SMR" id="Q5R5M4"/>
<dbReference type="FunCoup" id="Q5R5M4">
    <property type="interactions" value="290"/>
</dbReference>
<dbReference type="STRING" id="9601.ENSPPYP00000002813"/>
<dbReference type="GeneID" id="100173735"/>
<dbReference type="KEGG" id="pon:100173735"/>
<dbReference type="CTD" id="220963"/>
<dbReference type="eggNOG" id="KOG2504">
    <property type="taxonomic scope" value="Eukaryota"/>
</dbReference>
<dbReference type="InParanoid" id="Q5R5M4"/>
<dbReference type="OrthoDB" id="6509908at2759"/>
<dbReference type="Proteomes" id="UP000001595">
    <property type="component" value="Unplaced"/>
</dbReference>
<dbReference type="GO" id="GO:0005886">
    <property type="term" value="C:plasma membrane"/>
    <property type="evidence" value="ECO:0000250"/>
    <property type="project" value="UniProtKB"/>
</dbReference>
<dbReference type="GO" id="GO:0015226">
    <property type="term" value="F:carnitine transmembrane transporter activity"/>
    <property type="evidence" value="ECO:0000250"/>
    <property type="project" value="UniProtKB"/>
</dbReference>
<dbReference type="GO" id="GO:0005308">
    <property type="term" value="F:creatine transmembrane transporter activity"/>
    <property type="evidence" value="ECO:0000250"/>
    <property type="project" value="UniProtKB"/>
</dbReference>
<dbReference type="GO" id="GO:0008028">
    <property type="term" value="F:monocarboxylic acid transmembrane transporter activity"/>
    <property type="evidence" value="ECO:0007669"/>
    <property type="project" value="TreeGrafter"/>
</dbReference>
<dbReference type="GO" id="GO:0015293">
    <property type="term" value="F:symporter activity"/>
    <property type="evidence" value="ECO:0007669"/>
    <property type="project" value="UniProtKB-KW"/>
</dbReference>
<dbReference type="GO" id="GO:1902603">
    <property type="term" value="P:carnitine transmembrane transport"/>
    <property type="evidence" value="ECO:0000250"/>
    <property type="project" value="UniProtKB"/>
</dbReference>
<dbReference type="GO" id="GO:0015881">
    <property type="term" value="P:creatine transmembrane transport"/>
    <property type="evidence" value="ECO:0000250"/>
    <property type="project" value="UniProtKB"/>
</dbReference>
<dbReference type="CDD" id="cd17428">
    <property type="entry name" value="MFS_MCT9"/>
    <property type="match status" value="1"/>
</dbReference>
<dbReference type="FunFam" id="1.20.1250.20:FF:000195">
    <property type="entry name" value="monocarboxylate transporter 9 isoform X1"/>
    <property type="match status" value="1"/>
</dbReference>
<dbReference type="FunFam" id="1.20.1250.20:FF:000127">
    <property type="entry name" value="Monocarboxylate transporter 9 isoform X2"/>
    <property type="match status" value="1"/>
</dbReference>
<dbReference type="Gene3D" id="1.20.1250.20">
    <property type="entry name" value="MFS general substrate transporter like domains"/>
    <property type="match status" value="2"/>
</dbReference>
<dbReference type="InterPro" id="IPR030767">
    <property type="entry name" value="MCT9"/>
</dbReference>
<dbReference type="InterPro" id="IPR011701">
    <property type="entry name" value="MFS"/>
</dbReference>
<dbReference type="InterPro" id="IPR020846">
    <property type="entry name" value="MFS_dom"/>
</dbReference>
<dbReference type="InterPro" id="IPR036259">
    <property type="entry name" value="MFS_trans_sf"/>
</dbReference>
<dbReference type="InterPro" id="IPR050327">
    <property type="entry name" value="Proton-linked_MCT"/>
</dbReference>
<dbReference type="PANTHER" id="PTHR11360">
    <property type="entry name" value="MONOCARBOXYLATE TRANSPORTER"/>
    <property type="match status" value="1"/>
</dbReference>
<dbReference type="PANTHER" id="PTHR11360:SF158">
    <property type="entry name" value="MONOCARBOXYLATE TRANSPORTER 9"/>
    <property type="match status" value="1"/>
</dbReference>
<dbReference type="Pfam" id="PF07690">
    <property type="entry name" value="MFS_1"/>
    <property type="match status" value="2"/>
</dbReference>
<dbReference type="SUPFAM" id="SSF103473">
    <property type="entry name" value="MFS general substrate transporter"/>
    <property type="match status" value="1"/>
</dbReference>
<dbReference type="PROSITE" id="PS50850">
    <property type="entry name" value="MFS"/>
    <property type="match status" value="1"/>
</dbReference>
<feature type="chain" id="PRO_0000289334" description="Monocarboxylate transporter 9">
    <location>
        <begin position="1"/>
        <end position="509"/>
    </location>
</feature>
<feature type="topological domain" description="Cytoplasmic" evidence="2">
    <location>
        <begin position="1"/>
        <end position="12"/>
    </location>
</feature>
<feature type="transmembrane region" description="Helical" evidence="2">
    <location>
        <begin position="13"/>
        <end position="33"/>
    </location>
</feature>
<feature type="transmembrane region" description="Helical" evidence="2">
    <location>
        <begin position="53"/>
        <end position="73"/>
    </location>
</feature>
<feature type="transmembrane region" description="Helical" evidence="2">
    <location>
        <begin position="80"/>
        <end position="100"/>
    </location>
</feature>
<feature type="transmembrane region" description="Helical" evidence="2">
    <location>
        <begin position="102"/>
        <end position="122"/>
    </location>
</feature>
<feature type="transmembrane region" description="Helical" evidence="2">
    <location>
        <begin position="137"/>
        <end position="157"/>
    </location>
</feature>
<feature type="transmembrane region" description="Helical" evidence="2">
    <location>
        <begin position="164"/>
        <end position="184"/>
    </location>
</feature>
<feature type="transmembrane region" description="Helical" evidence="2">
    <location>
        <begin position="305"/>
        <end position="325"/>
    </location>
</feature>
<feature type="transmembrane region" description="Helical" evidence="2">
    <location>
        <begin position="342"/>
        <end position="362"/>
    </location>
</feature>
<feature type="transmembrane region" description="Helical" evidence="2">
    <location>
        <begin position="372"/>
        <end position="392"/>
    </location>
</feature>
<feature type="transmembrane region" description="Helical" evidence="2">
    <location>
        <begin position="398"/>
        <end position="418"/>
    </location>
</feature>
<feature type="transmembrane region" description="Helical" evidence="2">
    <location>
        <begin position="433"/>
        <end position="453"/>
    </location>
</feature>
<feature type="transmembrane region" description="Helical" evidence="2">
    <location>
        <begin position="462"/>
        <end position="482"/>
    </location>
</feature>
<feature type="topological domain" description="Cytoplasmic" evidence="2">
    <location>
        <begin position="483"/>
        <end position="509"/>
    </location>
</feature>
<feature type="sequence conflict" description="In Ref. 1; CAH93001." evidence="3" ref="1">
    <original>E</original>
    <variation>G</variation>
    <location>
        <position position="461"/>
    </location>
</feature>
<name>MOT9_PONAB</name>
<gene>
    <name type="primary">SLC16A9</name>
    <name type="synonym">MCT9</name>
</gene>
<proteinExistence type="evidence at transcript level"/>